<proteinExistence type="evidence at protein level"/>
<gene>
    <name evidence="6" type="primary">PR5K</name>
    <name evidence="8" type="ordered locus">At5g38280</name>
    <name evidence="9" type="ORF">MXA21.170</name>
</gene>
<organism>
    <name type="scientific">Arabidopsis thaliana</name>
    <name type="common">Mouse-ear cress</name>
    <dbReference type="NCBI Taxonomy" id="3702"/>
    <lineage>
        <taxon>Eukaryota</taxon>
        <taxon>Viridiplantae</taxon>
        <taxon>Streptophyta</taxon>
        <taxon>Embryophyta</taxon>
        <taxon>Tracheophyta</taxon>
        <taxon>Spermatophyta</taxon>
        <taxon>Magnoliopsida</taxon>
        <taxon>eudicotyledons</taxon>
        <taxon>Gunneridae</taxon>
        <taxon>Pentapetalae</taxon>
        <taxon>rosids</taxon>
        <taxon>malvids</taxon>
        <taxon>Brassicales</taxon>
        <taxon>Brassicaceae</taxon>
        <taxon>Camelineae</taxon>
        <taxon>Arabidopsis</taxon>
    </lineage>
</organism>
<evidence type="ECO:0000255" key="1"/>
<evidence type="ECO:0000255" key="2">
    <source>
        <dbReference type="PROSITE-ProRule" id="PRU00159"/>
    </source>
</evidence>
<evidence type="ECO:0000255" key="3">
    <source>
        <dbReference type="PROSITE-ProRule" id="PRU00498"/>
    </source>
</evidence>
<evidence type="ECO:0000255" key="4">
    <source>
        <dbReference type="PROSITE-ProRule" id="PRU00699"/>
    </source>
</evidence>
<evidence type="ECO:0000269" key="5">
    <source>
    </source>
</evidence>
<evidence type="ECO:0000303" key="6">
    <source>
    </source>
</evidence>
<evidence type="ECO:0000305" key="7"/>
<evidence type="ECO:0000312" key="8">
    <source>
        <dbReference type="Araport" id="AT5G38280"/>
    </source>
</evidence>
<evidence type="ECO:0000312" key="9">
    <source>
        <dbReference type="EMBL" id="BAB11294.1"/>
    </source>
</evidence>
<dbReference type="EC" id="2.7.11.1" evidence="5"/>
<dbReference type="EMBL" id="U48698">
    <property type="protein sequence ID" value="AAC49208.1"/>
    <property type="molecule type" value="mRNA"/>
</dbReference>
<dbReference type="EMBL" id="AB005247">
    <property type="protein sequence ID" value="BAB11294.1"/>
    <property type="molecule type" value="Genomic_DNA"/>
</dbReference>
<dbReference type="EMBL" id="CP002688">
    <property type="protein sequence ID" value="AED94289.1"/>
    <property type="molecule type" value="Genomic_DNA"/>
</dbReference>
<dbReference type="RefSeq" id="NP_198644.1">
    <property type="nucleotide sequence ID" value="NM_123189.2"/>
</dbReference>
<dbReference type="SMR" id="Q9FF29"/>
<dbReference type="FunCoup" id="Q9FF29">
    <property type="interactions" value="1"/>
</dbReference>
<dbReference type="STRING" id="3702.Q9FF29"/>
<dbReference type="GlyCosmos" id="Q9FF29">
    <property type="glycosylation" value="4 sites, No reported glycans"/>
</dbReference>
<dbReference type="GlyGen" id="Q9FF29">
    <property type="glycosylation" value="4 sites"/>
</dbReference>
<dbReference type="PaxDb" id="3702-AT5G38280.1"/>
<dbReference type="ProteomicsDB" id="225986"/>
<dbReference type="EnsemblPlants" id="AT5G38280.1">
    <property type="protein sequence ID" value="AT5G38280.1"/>
    <property type="gene ID" value="AT5G38280"/>
</dbReference>
<dbReference type="GeneID" id="833810"/>
<dbReference type="Gramene" id="AT5G38280.1">
    <property type="protein sequence ID" value="AT5G38280.1"/>
    <property type="gene ID" value="AT5G38280"/>
</dbReference>
<dbReference type="KEGG" id="ath:AT5G38280"/>
<dbReference type="Araport" id="AT5G38280"/>
<dbReference type="TAIR" id="AT5G38280">
    <property type="gene designation" value="PR5K"/>
</dbReference>
<dbReference type="eggNOG" id="ENOG502SK6K">
    <property type="taxonomic scope" value="Eukaryota"/>
</dbReference>
<dbReference type="HOGENOM" id="CLU_000288_170_0_1"/>
<dbReference type="InParanoid" id="Q9FF29"/>
<dbReference type="OMA" id="QVITHIA"/>
<dbReference type="PhylomeDB" id="Q9FF29"/>
<dbReference type="PRO" id="PR:Q9FF29"/>
<dbReference type="Proteomes" id="UP000006548">
    <property type="component" value="Chromosome 5"/>
</dbReference>
<dbReference type="ExpressionAtlas" id="Q9FF29">
    <property type="expression patterns" value="baseline and differential"/>
</dbReference>
<dbReference type="GO" id="GO:0016020">
    <property type="term" value="C:membrane"/>
    <property type="evidence" value="ECO:0007669"/>
    <property type="project" value="UniProtKB-SubCell"/>
</dbReference>
<dbReference type="GO" id="GO:0009506">
    <property type="term" value="C:plasmodesma"/>
    <property type="evidence" value="ECO:0007005"/>
    <property type="project" value="TAIR"/>
</dbReference>
<dbReference type="GO" id="GO:0005524">
    <property type="term" value="F:ATP binding"/>
    <property type="evidence" value="ECO:0007669"/>
    <property type="project" value="UniProtKB-KW"/>
</dbReference>
<dbReference type="GO" id="GO:0004672">
    <property type="term" value="F:protein kinase activity"/>
    <property type="evidence" value="ECO:0000314"/>
    <property type="project" value="UniProtKB"/>
</dbReference>
<dbReference type="GO" id="GO:0106310">
    <property type="term" value="F:protein serine kinase activity"/>
    <property type="evidence" value="ECO:0007669"/>
    <property type="project" value="RHEA"/>
</dbReference>
<dbReference type="GO" id="GO:0004675">
    <property type="term" value="F:transmembrane receptor protein serine/threonine kinase activity"/>
    <property type="evidence" value="ECO:0000250"/>
    <property type="project" value="TAIR"/>
</dbReference>
<dbReference type="GO" id="GO:0009620">
    <property type="term" value="P:response to fungus"/>
    <property type="evidence" value="ECO:0000250"/>
    <property type="project" value="TAIR"/>
</dbReference>
<dbReference type="CDD" id="cd09218">
    <property type="entry name" value="TLP-PA"/>
    <property type="match status" value="1"/>
</dbReference>
<dbReference type="FunFam" id="1.10.510.10:FF:000590">
    <property type="entry name" value="PR5-like receptor kinase"/>
    <property type="match status" value="1"/>
</dbReference>
<dbReference type="FunFam" id="3.30.200.20:FF:000644">
    <property type="entry name" value="Suppressor of npr1-1 constitutive 4"/>
    <property type="match status" value="1"/>
</dbReference>
<dbReference type="FunFam" id="2.60.110.10:FF:000004">
    <property type="entry name" value="THAUMATIN-LIKE PROTEIN 1"/>
    <property type="match status" value="1"/>
</dbReference>
<dbReference type="Gene3D" id="3.30.200.20">
    <property type="entry name" value="Phosphorylase Kinase, domain 1"/>
    <property type="match status" value="1"/>
</dbReference>
<dbReference type="Gene3D" id="2.60.110.10">
    <property type="entry name" value="Thaumatin"/>
    <property type="match status" value="1"/>
</dbReference>
<dbReference type="Gene3D" id="1.10.510.10">
    <property type="entry name" value="Transferase(Phosphotransferase) domain 1"/>
    <property type="match status" value="1"/>
</dbReference>
<dbReference type="InterPro" id="IPR011009">
    <property type="entry name" value="Kinase-like_dom_sf"/>
</dbReference>
<dbReference type="InterPro" id="IPR045874">
    <property type="entry name" value="LRK10/LRL21-25-like"/>
</dbReference>
<dbReference type="InterPro" id="IPR037176">
    <property type="entry name" value="Osmotin/thaumatin-like_sf"/>
</dbReference>
<dbReference type="InterPro" id="IPR000719">
    <property type="entry name" value="Prot_kinase_dom"/>
</dbReference>
<dbReference type="InterPro" id="IPR017441">
    <property type="entry name" value="Protein_kinase_ATP_BS"/>
</dbReference>
<dbReference type="InterPro" id="IPR008271">
    <property type="entry name" value="Ser/Thr_kinase_AS"/>
</dbReference>
<dbReference type="InterPro" id="IPR001938">
    <property type="entry name" value="Thaumatin"/>
</dbReference>
<dbReference type="InterPro" id="IPR017949">
    <property type="entry name" value="Thaumatin_CS"/>
</dbReference>
<dbReference type="PANTHER" id="PTHR27009">
    <property type="entry name" value="RUST RESISTANCE KINASE LR10-RELATED"/>
    <property type="match status" value="1"/>
</dbReference>
<dbReference type="Pfam" id="PF00069">
    <property type="entry name" value="Pkinase"/>
    <property type="match status" value="1"/>
</dbReference>
<dbReference type="Pfam" id="PF00314">
    <property type="entry name" value="Thaumatin"/>
    <property type="match status" value="1"/>
</dbReference>
<dbReference type="PRINTS" id="PR00347">
    <property type="entry name" value="THAUMATIN"/>
</dbReference>
<dbReference type="SMART" id="SM00220">
    <property type="entry name" value="S_TKc"/>
    <property type="match status" value="1"/>
</dbReference>
<dbReference type="SMART" id="SM00205">
    <property type="entry name" value="THN"/>
    <property type="match status" value="1"/>
</dbReference>
<dbReference type="SUPFAM" id="SSF49870">
    <property type="entry name" value="Osmotin, thaumatin-like protein"/>
    <property type="match status" value="1"/>
</dbReference>
<dbReference type="SUPFAM" id="SSF56112">
    <property type="entry name" value="Protein kinase-like (PK-like)"/>
    <property type="match status" value="1"/>
</dbReference>
<dbReference type="PROSITE" id="PS00107">
    <property type="entry name" value="PROTEIN_KINASE_ATP"/>
    <property type="match status" value="1"/>
</dbReference>
<dbReference type="PROSITE" id="PS50011">
    <property type="entry name" value="PROTEIN_KINASE_DOM"/>
    <property type="match status" value="1"/>
</dbReference>
<dbReference type="PROSITE" id="PS00108">
    <property type="entry name" value="PROTEIN_KINASE_ST"/>
    <property type="match status" value="1"/>
</dbReference>
<dbReference type="PROSITE" id="PS00316">
    <property type="entry name" value="THAUMATIN_1"/>
    <property type="match status" value="1"/>
</dbReference>
<dbReference type="PROSITE" id="PS51367">
    <property type="entry name" value="THAUMATIN_2"/>
    <property type="match status" value="1"/>
</dbReference>
<name>PR5K_ARATH</name>
<keyword id="KW-0067">ATP-binding</keyword>
<keyword id="KW-1015">Disulfide bond</keyword>
<keyword id="KW-0325">Glycoprotein</keyword>
<keyword id="KW-0418">Kinase</keyword>
<keyword id="KW-0472">Membrane</keyword>
<keyword id="KW-0547">Nucleotide-binding</keyword>
<keyword id="KW-1185">Reference proteome</keyword>
<keyword id="KW-0723">Serine/threonine-protein kinase</keyword>
<keyword id="KW-0732">Signal</keyword>
<keyword id="KW-0808">Transferase</keyword>
<keyword id="KW-0812">Transmembrane</keyword>
<keyword id="KW-1133">Transmembrane helix</keyword>
<protein>
    <recommendedName>
        <fullName evidence="6">PR5-like receptor kinase</fullName>
        <ecNumber evidence="5">2.7.11.1</ecNumber>
    </recommendedName>
</protein>
<feature type="signal peptide" evidence="1">
    <location>
        <begin position="1"/>
        <end position="24"/>
    </location>
</feature>
<feature type="chain" id="PRO_5011950818" description="PR5-like receptor kinase">
    <location>
        <begin position="25"/>
        <end position="665"/>
    </location>
</feature>
<feature type="topological domain" description="Extracellular" evidence="7">
    <location>
        <begin position="25"/>
        <end position="276"/>
    </location>
</feature>
<feature type="transmembrane region" description="Helical" evidence="1">
    <location>
        <begin position="277"/>
        <end position="297"/>
    </location>
</feature>
<feature type="topological domain" description="Cytoplasmic" evidence="7">
    <location>
        <begin position="298"/>
        <end position="665"/>
    </location>
</feature>
<feature type="domain" description="Protein kinase" evidence="2">
    <location>
        <begin position="331"/>
        <end position="620"/>
    </location>
</feature>
<feature type="active site" description="Proton acceptor" evidence="2">
    <location>
        <position position="455"/>
    </location>
</feature>
<feature type="binding site" evidence="2">
    <location>
        <begin position="337"/>
        <end position="345"/>
    </location>
    <ligand>
        <name>ATP</name>
        <dbReference type="ChEBI" id="CHEBI:30616"/>
    </ligand>
</feature>
<feature type="binding site" evidence="2">
    <location>
        <position position="360"/>
    </location>
    <ligand>
        <name>ATP</name>
        <dbReference type="ChEBI" id="CHEBI:30616"/>
    </ligand>
</feature>
<feature type="glycosylation site" description="N-linked (GlcNAc...) asparagine" evidence="3">
    <location>
        <position position="26"/>
    </location>
</feature>
<feature type="glycosylation site" description="N-linked (GlcNAc...) asparagine" evidence="3">
    <location>
        <position position="88"/>
    </location>
</feature>
<feature type="glycosylation site" description="N-linked (GlcNAc...) asparagine" evidence="3">
    <location>
        <position position="163"/>
    </location>
</feature>
<feature type="glycosylation site" description="N-linked (GlcNAc...) asparagine" evidence="3">
    <location>
        <position position="233"/>
    </location>
</feature>
<feature type="disulfide bond" evidence="4">
    <location>
        <begin position="33"/>
        <end position="249"/>
    </location>
</feature>
<feature type="disulfide bond" evidence="4">
    <location>
        <begin position="81"/>
        <end position="91"/>
    </location>
</feature>
<feature type="disulfide bond" evidence="4">
    <location>
        <begin position="96"/>
        <end position="103"/>
    </location>
</feature>
<feature type="disulfide bond" evidence="4">
    <location>
        <begin position="153"/>
        <end position="238"/>
    </location>
</feature>
<feature type="disulfide bond" evidence="4">
    <location>
        <begin position="158"/>
        <end position="221"/>
    </location>
</feature>
<feature type="disulfide bond" evidence="4">
    <location>
        <begin position="166"/>
        <end position="184"/>
    </location>
</feature>
<feature type="disulfide bond" evidence="4">
    <location>
        <begin position="188"/>
        <end position="197"/>
    </location>
</feature>
<feature type="disulfide bond" evidence="4">
    <location>
        <begin position="198"/>
        <end position="208"/>
    </location>
</feature>
<feature type="mutagenesis site" description="Loss of kinase activity." evidence="5">
    <original>K</original>
    <variation>R</variation>
    <location>
        <position position="360"/>
    </location>
</feature>
<feature type="sequence conflict" description="In Ref. 1; AAC49208." evidence="7" ref="1">
    <original>R</original>
    <variation>T</variation>
    <location>
        <position position="25"/>
    </location>
</feature>
<feature type="sequence conflict" description="In Ref. 1; AAC49208." evidence="7" ref="1">
    <original>G</original>
    <variation>E</variation>
    <location>
        <position position="540"/>
    </location>
</feature>
<feature type="sequence conflict" description="In Ref. 1; AAC49208." evidence="7" ref="1">
    <original>DSITDEEEKI</original>
    <variation>NSITEEEEKF</variation>
    <location>
        <begin position="567"/>
        <end position="576"/>
    </location>
</feature>
<feature type="sequence conflict" description="In Ref. 1; AAC49208." evidence="7" ref="1">
    <original>I</original>
    <variation>T</variation>
    <location>
        <position position="602"/>
    </location>
</feature>
<feature type="sequence conflict" description="In Ref. 1; AAC49208." evidence="7" ref="1">
    <original>D</original>
    <variation>A</variation>
    <location>
        <position position="653"/>
    </location>
</feature>
<comment type="function">
    <text evidence="5">Possesses kinase activity in vitro.</text>
</comment>
<comment type="catalytic activity">
    <reaction evidence="5">
        <text>L-seryl-[protein] + ATP = O-phospho-L-seryl-[protein] + ADP + H(+)</text>
        <dbReference type="Rhea" id="RHEA:17989"/>
        <dbReference type="Rhea" id="RHEA-COMP:9863"/>
        <dbReference type="Rhea" id="RHEA-COMP:11604"/>
        <dbReference type="ChEBI" id="CHEBI:15378"/>
        <dbReference type="ChEBI" id="CHEBI:29999"/>
        <dbReference type="ChEBI" id="CHEBI:30616"/>
        <dbReference type="ChEBI" id="CHEBI:83421"/>
        <dbReference type="ChEBI" id="CHEBI:456216"/>
        <dbReference type="EC" id="2.7.11.1"/>
    </reaction>
</comment>
<comment type="catalytic activity">
    <reaction evidence="5">
        <text>L-threonyl-[protein] + ATP = O-phospho-L-threonyl-[protein] + ADP + H(+)</text>
        <dbReference type="Rhea" id="RHEA:46608"/>
        <dbReference type="Rhea" id="RHEA-COMP:11060"/>
        <dbReference type="Rhea" id="RHEA-COMP:11605"/>
        <dbReference type="ChEBI" id="CHEBI:15378"/>
        <dbReference type="ChEBI" id="CHEBI:30013"/>
        <dbReference type="ChEBI" id="CHEBI:30616"/>
        <dbReference type="ChEBI" id="CHEBI:61977"/>
        <dbReference type="ChEBI" id="CHEBI:456216"/>
        <dbReference type="EC" id="2.7.11.1"/>
    </reaction>
</comment>
<comment type="subcellular location">
    <subcellularLocation>
        <location evidence="1">Membrane</location>
        <topology evidence="1">Single-pass type I membrane protein</topology>
    </subcellularLocation>
</comment>
<comment type="tissue specificity">
    <text evidence="5">Expressed in roots. Expressed at low levels in stems.</text>
</comment>
<comment type="PTM">
    <text evidence="5">Autophosphorylated in vitro.</text>
</comment>
<comment type="similarity">
    <text evidence="7">In the N-terminal section; belongs to the thaumatin family.</text>
</comment>
<comment type="similarity">
    <text evidence="7">In the C-terminal section; belongs to the protein kinase superfamily. Ser/Thr protein kinase family.</text>
</comment>
<sequence length="665" mass="73952">MVEGFSLSLMFLLVSHFFVSGVMSRNFTIENKCDYTVWPGFLTMTTAVSLPTNGFSLKKGESRVINVPPSWSGRLWGRSFCSTSSTGNFSCATGDCGSGKIECSDSGARPPTTLIDFTLDATDGQDFYDVSVVDGYNLPLVVVPQRLGSGRTCSNVGCVVNLNKTCPSELKVMGSSNKEHPIACMNACQKFGLPEFCCYGEYGKPAKCQPTLYSTNFKNECPLAYSYAYDNENNTFRCSNSPNYVITFCPNDISSMSQPSKETNGGTKQKSSWKLKLIVGVSAALTLMILIVVVIIVRTKNMRNSEWNDQNVEAVAMLKRYSYTRVKKMTNSFAHVLGKGGFGTVYKGKLADSGRDVAVKILKVSEGNGEEFINEVASMSRTSHVNIVSLLGFCYEKNKRAIIYEFMPNGSLDKYISANMSTKMEWERLYDVAVGISRGLEYLHNRCVTRIVHFDIKPQNILMDENLCPKISDFGLAKLCKNKESIISMLHMRGTFGYIAPEMFSKNFGAVSHKSDVYSYGMVVLEMIGAKNIEKVEYSGSNNGSMYFPEWVYKDFEKGEITRIFGDSITDEEEKIAKKLVLVALWCIQMNPSDRPPMIKVIEMLEGNLEALQVPPNPLLFSPEETVPDTLEDSDDTSTFFNPSHFERGTLLDSEDVLQHGSRSS</sequence>
<reference key="1">
    <citation type="journal article" date="1996" name="Proc. Natl. Acad. Sci. U.S.A.">
        <title>The PR5K receptor protein kinase from Arabidopsis thaliana is structurally related to a family of plant defense proteins.</title>
        <authorList>
            <person name="Wang X."/>
            <person name="Zafian P."/>
            <person name="Choudhary M."/>
            <person name="Lawton M."/>
        </authorList>
    </citation>
    <scope>NUCLEOTIDE SEQUENCE [MRNA]</scope>
    <scope>FUNCTION</scope>
    <scope>TISSUE SPECIFICITY</scope>
    <scope>AUTOPHOSPHORYLATION</scope>
    <scope>MUTAGENESIS OF LYS-360</scope>
    <source>
        <strain>cv. Columbia</strain>
    </source>
</reference>
<reference key="2">
    <citation type="journal article" date="1997" name="DNA Res.">
        <title>Structural analysis of Arabidopsis thaliana chromosome 5. I. Sequence features of the 1.6 Mb regions covered by twenty physically assigned P1 clones.</title>
        <authorList>
            <person name="Sato S."/>
            <person name="Kotani H."/>
            <person name="Nakamura Y."/>
            <person name="Kaneko T."/>
            <person name="Asamizu E."/>
            <person name="Fukami M."/>
            <person name="Miyajima N."/>
            <person name="Tabata S."/>
        </authorList>
    </citation>
    <scope>NUCLEOTIDE SEQUENCE [LARGE SCALE GENOMIC DNA]</scope>
    <source>
        <strain>cv. Columbia</strain>
    </source>
</reference>
<reference key="3">
    <citation type="journal article" date="2017" name="Plant J.">
        <title>Araport11: a complete reannotation of the Arabidopsis thaliana reference genome.</title>
        <authorList>
            <person name="Cheng C.Y."/>
            <person name="Krishnakumar V."/>
            <person name="Chan A.P."/>
            <person name="Thibaud-Nissen F."/>
            <person name="Schobel S."/>
            <person name="Town C.D."/>
        </authorList>
    </citation>
    <scope>GENOME REANNOTATION</scope>
    <source>
        <strain>cv. Columbia</strain>
    </source>
</reference>
<accession>Q9FF29</accession>
<accession>Q38925</accession>